<name>NFUA_SHIFL</name>
<keyword id="KW-0004">4Fe-4S</keyword>
<keyword id="KW-0408">Iron</keyword>
<keyword id="KW-0411">Iron-sulfur</keyword>
<keyword id="KW-0479">Metal-binding</keyword>
<keyword id="KW-1185">Reference proteome</keyword>
<dbReference type="EMBL" id="AE005674">
    <property type="protein sequence ID" value="AAN44898.1"/>
    <property type="molecule type" value="Genomic_DNA"/>
</dbReference>
<dbReference type="EMBL" id="AE014073">
    <property type="protein sequence ID" value="AAP19283.1"/>
    <property type="molecule type" value="Genomic_DNA"/>
</dbReference>
<dbReference type="RefSeq" id="WP_000619389.1">
    <property type="nucleotide sequence ID" value="NZ_WPGW01000066.1"/>
</dbReference>
<dbReference type="SMR" id="P63023"/>
<dbReference type="STRING" id="198214.SF3437"/>
<dbReference type="PaxDb" id="198214-SF3437"/>
<dbReference type="GeneID" id="93778582"/>
<dbReference type="KEGG" id="sfl:SF3437"/>
<dbReference type="KEGG" id="sfx:S4328"/>
<dbReference type="PATRIC" id="fig|198214.7.peg.4054"/>
<dbReference type="HOGENOM" id="CLU_094569_0_0_6"/>
<dbReference type="Proteomes" id="UP000001006">
    <property type="component" value="Chromosome"/>
</dbReference>
<dbReference type="Proteomes" id="UP000002673">
    <property type="component" value="Chromosome"/>
</dbReference>
<dbReference type="GO" id="GO:0051539">
    <property type="term" value="F:4 iron, 4 sulfur cluster binding"/>
    <property type="evidence" value="ECO:0007669"/>
    <property type="project" value="UniProtKB-UniRule"/>
</dbReference>
<dbReference type="GO" id="GO:0005506">
    <property type="term" value="F:iron ion binding"/>
    <property type="evidence" value="ECO:0007669"/>
    <property type="project" value="InterPro"/>
</dbReference>
<dbReference type="GO" id="GO:0016226">
    <property type="term" value="P:iron-sulfur cluster assembly"/>
    <property type="evidence" value="ECO:0007669"/>
    <property type="project" value="UniProtKB-UniRule"/>
</dbReference>
<dbReference type="GO" id="GO:0051604">
    <property type="term" value="P:protein maturation"/>
    <property type="evidence" value="ECO:0007669"/>
    <property type="project" value="UniProtKB-UniRule"/>
</dbReference>
<dbReference type="FunFam" id="2.60.300.12:FF:000004">
    <property type="entry name" value="Fe/S biogenesis protein NfuA"/>
    <property type="match status" value="1"/>
</dbReference>
<dbReference type="FunFam" id="3.30.300.130:FF:000002">
    <property type="entry name" value="Fe/S biogenesis protein NfuA"/>
    <property type="match status" value="1"/>
</dbReference>
<dbReference type="Gene3D" id="3.30.300.130">
    <property type="entry name" value="Fe-S cluster assembly (FSCA)"/>
    <property type="match status" value="1"/>
</dbReference>
<dbReference type="Gene3D" id="2.60.300.12">
    <property type="entry name" value="HesB-like domain"/>
    <property type="match status" value="1"/>
</dbReference>
<dbReference type="HAMAP" id="MF_01637">
    <property type="entry name" value="Fe_S_biogen_NfuA"/>
    <property type="match status" value="1"/>
</dbReference>
<dbReference type="InterPro" id="IPR017726">
    <property type="entry name" value="Fe/S_biogenesis_protein_NfuA"/>
</dbReference>
<dbReference type="InterPro" id="IPR000361">
    <property type="entry name" value="FeS_biogenesis"/>
</dbReference>
<dbReference type="InterPro" id="IPR034904">
    <property type="entry name" value="FSCA_dom_sf"/>
</dbReference>
<dbReference type="InterPro" id="IPR035903">
    <property type="entry name" value="HesB-like_dom_sf"/>
</dbReference>
<dbReference type="InterPro" id="IPR001075">
    <property type="entry name" value="NIF_FeS_clus_asmbl_NifU_C"/>
</dbReference>
<dbReference type="NCBIfam" id="NF008392">
    <property type="entry name" value="PRK11190.1"/>
    <property type="match status" value="1"/>
</dbReference>
<dbReference type="NCBIfam" id="TIGR03341">
    <property type="entry name" value="YhgI_GntY"/>
    <property type="match status" value="1"/>
</dbReference>
<dbReference type="PANTHER" id="PTHR11178:SF51">
    <property type="entry name" value="FE_S BIOGENESIS PROTEIN NFUA"/>
    <property type="match status" value="1"/>
</dbReference>
<dbReference type="PANTHER" id="PTHR11178">
    <property type="entry name" value="IRON-SULFUR CLUSTER SCAFFOLD PROTEIN NFU-RELATED"/>
    <property type="match status" value="1"/>
</dbReference>
<dbReference type="Pfam" id="PF01521">
    <property type="entry name" value="Fe-S_biosyn"/>
    <property type="match status" value="1"/>
</dbReference>
<dbReference type="Pfam" id="PF01106">
    <property type="entry name" value="NifU"/>
    <property type="match status" value="1"/>
</dbReference>
<dbReference type="SUPFAM" id="SSF117916">
    <property type="entry name" value="Fe-S cluster assembly (FSCA) domain-like"/>
    <property type="match status" value="1"/>
</dbReference>
<dbReference type="SUPFAM" id="SSF89360">
    <property type="entry name" value="HesB-like domain"/>
    <property type="match status" value="1"/>
</dbReference>
<gene>
    <name evidence="1" type="primary">nfuA</name>
    <name type="ordered locus">SF3437</name>
    <name type="ordered locus">S4328</name>
</gene>
<sequence>MIRISDAAQAHFAKLLANQEEGTQIRVFVINPGTPNAECGVSYCPPDAVEATDTALKFDLLTAYVDELSAPYLEDAEIDFVTDQLGSQLTLKAPNAKMRKVADDAPLMERVEYMLQSQINPQLAGHGGRVSLMEITEDGYAILQFGGGCNGCSMVDVTLKEGIEKQLLNEFPELKGVRDLTEHQRGEHSYY</sequence>
<reference key="1">
    <citation type="journal article" date="2002" name="Nucleic Acids Res.">
        <title>Genome sequence of Shigella flexneri 2a: insights into pathogenicity through comparison with genomes of Escherichia coli K12 and O157.</title>
        <authorList>
            <person name="Jin Q."/>
            <person name="Yuan Z."/>
            <person name="Xu J."/>
            <person name="Wang Y."/>
            <person name="Shen Y."/>
            <person name="Lu W."/>
            <person name="Wang J."/>
            <person name="Liu H."/>
            <person name="Yang J."/>
            <person name="Yang F."/>
            <person name="Zhang X."/>
            <person name="Zhang J."/>
            <person name="Yang G."/>
            <person name="Wu H."/>
            <person name="Qu D."/>
            <person name="Dong J."/>
            <person name="Sun L."/>
            <person name="Xue Y."/>
            <person name="Zhao A."/>
            <person name="Gao Y."/>
            <person name="Zhu J."/>
            <person name="Kan B."/>
            <person name="Ding K."/>
            <person name="Chen S."/>
            <person name="Cheng H."/>
            <person name="Yao Z."/>
            <person name="He B."/>
            <person name="Chen R."/>
            <person name="Ma D."/>
            <person name="Qiang B."/>
            <person name="Wen Y."/>
            <person name="Hou Y."/>
            <person name="Yu J."/>
        </authorList>
    </citation>
    <scope>NUCLEOTIDE SEQUENCE [LARGE SCALE GENOMIC DNA]</scope>
    <source>
        <strain>301 / Serotype 2a</strain>
    </source>
</reference>
<reference key="2">
    <citation type="journal article" date="2003" name="Infect. Immun.">
        <title>Complete genome sequence and comparative genomics of Shigella flexneri serotype 2a strain 2457T.</title>
        <authorList>
            <person name="Wei J."/>
            <person name="Goldberg M.B."/>
            <person name="Burland V."/>
            <person name="Venkatesan M.M."/>
            <person name="Deng W."/>
            <person name="Fournier G."/>
            <person name="Mayhew G.F."/>
            <person name="Plunkett G. III"/>
            <person name="Rose D.J."/>
            <person name="Darling A."/>
            <person name="Mau B."/>
            <person name="Perna N.T."/>
            <person name="Payne S.M."/>
            <person name="Runyen-Janecky L.J."/>
            <person name="Zhou S."/>
            <person name="Schwartz D.C."/>
            <person name="Blattner F.R."/>
        </authorList>
    </citation>
    <scope>NUCLEOTIDE SEQUENCE [LARGE SCALE GENOMIC DNA]</scope>
    <source>
        <strain>ATCC 700930 / 2457T / Serotype 2a</strain>
    </source>
</reference>
<evidence type="ECO:0000255" key="1">
    <source>
        <dbReference type="HAMAP-Rule" id="MF_01637"/>
    </source>
</evidence>
<feature type="chain" id="PRO_0000209469" description="Fe/S biogenesis protein NfuA">
    <location>
        <begin position="1"/>
        <end position="191"/>
    </location>
</feature>
<feature type="binding site" evidence="1">
    <location>
        <position position="149"/>
    </location>
    <ligand>
        <name>[4Fe-4S] cluster</name>
        <dbReference type="ChEBI" id="CHEBI:49883"/>
    </ligand>
</feature>
<feature type="binding site" evidence="1">
    <location>
        <position position="152"/>
    </location>
    <ligand>
        <name>[4Fe-4S] cluster</name>
        <dbReference type="ChEBI" id="CHEBI:49883"/>
    </ligand>
</feature>
<comment type="function">
    <text evidence="1">Involved in iron-sulfur cluster biogenesis. Binds a 4Fe-4S cluster, can transfer this cluster to apoproteins, and thereby intervenes in the maturation of Fe/S proteins. Could also act as a scaffold/chaperone for damaged Fe/S proteins.</text>
</comment>
<comment type="cofactor">
    <cofactor evidence="1">
        <name>[4Fe-4S] cluster</name>
        <dbReference type="ChEBI" id="CHEBI:49883"/>
    </cofactor>
    <text evidence="1">Binds 1 [4Fe-4S] cluster per subunit. The cluster is presumably bound at the interface of two monomers.</text>
</comment>
<comment type="subunit">
    <text evidence="1">Homodimer.</text>
</comment>
<comment type="similarity">
    <text evidence="1">Belongs to the NfuA family.</text>
</comment>
<protein>
    <recommendedName>
        <fullName evidence="1">Fe/S biogenesis protein NfuA</fullName>
    </recommendedName>
</protein>
<accession>P63023</accession>
<accession>P46847</accession>
<organism>
    <name type="scientific">Shigella flexneri</name>
    <dbReference type="NCBI Taxonomy" id="623"/>
    <lineage>
        <taxon>Bacteria</taxon>
        <taxon>Pseudomonadati</taxon>
        <taxon>Pseudomonadota</taxon>
        <taxon>Gammaproteobacteria</taxon>
        <taxon>Enterobacterales</taxon>
        <taxon>Enterobacteriaceae</taxon>
        <taxon>Shigella</taxon>
    </lineage>
</organism>
<proteinExistence type="inferred from homology"/>